<organism>
    <name type="scientific">Bordetella pertussis (strain Tohama I / ATCC BAA-589 / NCTC 13251)</name>
    <dbReference type="NCBI Taxonomy" id="257313"/>
    <lineage>
        <taxon>Bacteria</taxon>
        <taxon>Pseudomonadati</taxon>
        <taxon>Pseudomonadota</taxon>
        <taxon>Betaproteobacteria</taxon>
        <taxon>Burkholderiales</taxon>
        <taxon>Alcaligenaceae</taxon>
        <taxon>Bordetella</taxon>
    </lineage>
</organism>
<name>SODM_BORPE</name>
<evidence type="ECO:0000250" key="1"/>
<evidence type="ECO:0000305" key="2"/>
<sequence length="211" mass="23212">MPYVLPALSYAYDALEPHIDARTMEIHHTRHHQTYVNGLNAALEGAGLDSEEPVEQLLRRIPALPPGIHGAVRNHGGGHANHSLLWTVMSPSGGGRPDGRLAADIQAQLGGHDAFQAAFTQAALGRFGSGWAWLTVTPAGRLRVDSSANQDSPLMEGNTPILGLDVWEHAYYLQYQNRRPEYIEAFYRVVDWAEVARRYEIALAELGREAA</sequence>
<comment type="function">
    <text>Destroys superoxide anion radicals which are normally produced within the cells and which are toxic to biological systems.</text>
</comment>
<comment type="catalytic activity">
    <reaction>
        <text>2 superoxide + 2 H(+) = H2O2 + O2</text>
        <dbReference type="Rhea" id="RHEA:20696"/>
        <dbReference type="ChEBI" id="CHEBI:15378"/>
        <dbReference type="ChEBI" id="CHEBI:15379"/>
        <dbReference type="ChEBI" id="CHEBI:16240"/>
        <dbReference type="ChEBI" id="CHEBI:18421"/>
        <dbReference type="EC" id="1.15.1.1"/>
    </reaction>
</comment>
<comment type="cofactor">
    <cofactor evidence="1">
        <name>Mn(2+)</name>
        <dbReference type="ChEBI" id="CHEBI:29035"/>
    </cofactor>
    <text evidence="1">Binds 1 Mn(2+) ion per subunit.</text>
</comment>
<comment type="subunit">
    <text evidence="1">Homodimer.</text>
</comment>
<comment type="similarity">
    <text evidence="2">Belongs to the iron/manganese superoxide dismutase family.</text>
</comment>
<keyword id="KW-0464">Manganese</keyword>
<keyword id="KW-0479">Metal-binding</keyword>
<keyword id="KW-0560">Oxidoreductase</keyword>
<keyword id="KW-1185">Reference proteome</keyword>
<gene>
    <name type="primary">sodA</name>
    <name type="ordered locus">BP0193</name>
</gene>
<protein>
    <recommendedName>
        <fullName>Superoxide dismutase [Mn]</fullName>
        <ecNumber>1.15.1.1</ecNumber>
    </recommendedName>
</protein>
<feature type="chain" id="PRO_0000160021" description="Superoxide dismutase [Mn]">
    <location>
        <begin position="1"/>
        <end position="211"/>
    </location>
</feature>
<feature type="binding site" evidence="1">
    <location>
        <position position="27"/>
    </location>
    <ligand>
        <name>Mn(2+)</name>
        <dbReference type="ChEBI" id="CHEBI:29035"/>
    </ligand>
</feature>
<feature type="binding site" evidence="1">
    <location>
        <position position="82"/>
    </location>
    <ligand>
        <name>Mn(2+)</name>
        <dbReference type="ChEBI" id="CHEBI:29035"/>
    </ligand>
</feature>
<feature type="binding site" evidence="1">
    <location>
        <position position="165"/>
    </location>
    <ligand>
        <name>Mn(2+)</name>
        <dbReference type="ChEBI" id="CHEBI:29035"/>
    </ligand>
</feature>
<feature type="binding site" evidence="1">
    <location>
        <position position="169"/>
    </location>
    <ligand>
        <name>Mn(2+)</name>
        <dbReference type="ChEBI" id="CHEBI:29035"/>
    </ligand>
</feature>
<proteinExistence type="inferred from homology"/>
<reference key="1">
    <citation type="journal article" date="1997" name="J. Bacteriol.">
        <title>Cloning and characterization of an Mn-containing superoxide dismutase (SodA) of Bordetella pertussis.</title>
        <authorList>
            <person name="Graeff-Wohlleben H."/>
            <person name="Killat S."/>
            <person name="Banemann A."/>
            <person name="Guiso N."/>
            <person name="Gross R."/>
        </authorList>
    </citation>
    <scope>NUCLEOTIDE SEQUENCE [GENOMIC DNA]</scope>
    <source>
        <strain>Tohama I / ATCC BAA-589 / NCTC 13251</strain>
    </source>
</reference>
<reference key="2">
    <citation type="journal article" date="2003" name="Nat. Genet.">
        <title>Comparative analysis of the genome sequences of Bordetella pertussis, Bordetella parapertussis and Bordetella bronchiseptica.</title>
        <authorList>
            <person name="Parkhill J."/>
            <person name="Sebaihia M."/>
            <person name="Preston A."/>
            <person name="Murphy L.D."/>
            <person name="Thomson N.R."/>
            <person name="Harris D.E."/>
            <person name="Holden M.T.G."/>
            <person name="Churcher C.M."/>
            <person name="Bentley S.D."/>
            <person name="Mungall K.L."/>
            <person name="Cerdeno-Tarraga A.-M."/>
            <person name="Temple L."/>
            <person name="James K.D."/>
            <person name="Harris B."/>
            <person name="Quail M.A."/>
            <person name="Achtman M."/>
            <person name="Atkin R."/>
            <person name="Baker S."/>
            <person name="Basham D."/>
            <person name="Bason N."/>
            <person name="Cherevach I."/>
            <person name="Chillingworth T."/>
            <person name="Collins M."/>
            <person name="Cronin A."/>
            <person name="Davis P."/>
            <person name="Doggett J."/>
            <person name="Feltwell T."/>
            <person name="Goble A."/>
            <person name="Hamlin N."/>
            <person name="Hauser H."/>
            <person name="Holroyd S."/>
            <person name="Jagels K."/>
            <person name="Leather S."/>
            <person name="Moule S."/>
            <person name="Norberczak H."/>
            <person name="O'Neil S."/>
            <person name="Ormond D."/>
            <person name="Price C."/>
            <person name="Rabbinowitsch E."/>
            <person name="Rutter S."/>
            <person name="Sanders M."/>
            <person name="Saunders D."/>
            <person name="Seeger K."/>
            <person name="Sharp S."/>
            <person name="Simmonds M."/>
            <person name="Skelton J."/>
            <person name="Squares R."/>
            <person name="Squares S."/>
            <person name="Stevens K."/>
            <person name="Unwin L."/>
            <person name="Whitehead S."/>
            <person name="Barrell B.G."/>
            <person name="Maskell D.J."/>
        </authorList>
    </citation>
    <scope>NUCLEOTIDE SEQUENCE [LARGE SCALE GENOMIC DNA]</scope>
    <source>
        <strain>Tohama I / ATCC BAA-589 / NCTC 13251</strain>
    </source>
</reference>
<dbReference type="EC" id="1.15.1.1"/>
<dbReference type="EMBL" id="X84800">
    <property type="protein sequence ID" value="CAA59267.1"/>
    <property type="molecule type" value="Genomic_DNA"/>
</dbReference>
<dbReference type="EMBL" id="BX640411">
    <property type="protein sequence ID" value="CAE40572.1"/>
    <property type="molecule type" value="Genomic_DNA"/>
</dbReference>
<dbReference type="RefSeq" id="NP_879082.1">
    <property type="nucleotide sequence ID" value="NC_002929.2"/>
</dbReference>
<dbReference type="RefSeq" id="WP_010929673.1">
    <property type="nucleotide sequence ID" value="NZ_CP039022.1"/>
</dbReference>
<dbReference type="SMR" id="P53642"/>
<dbReference type="STRING" id="257313.BP0193"/>
<dbReference type="PaxDb" id="257313-BP0193"/>
<dbReference type="KEGG" id="bpe:BP0193"/>
<dbReference type="PATRIC" id="fig|257313.5.peg.204"/>
<dbReference type="eggNOG" id="COG0605">
    <property type="taxonomic scope" value="Bacteria"/>
</dbReference>
<dbReference type="HOGENOM" id="CLU_031625_0_1_4"/>
<dbReference type="Proteomes" id="UP000002676">
    <property type="component" value="Chromosome"/>
</dbReference>
<dbReference type="GO" id="GO:0005737">
    <property type="term" value="C:cytoplasm"/>
    <property type="evidence" value="ECO:0007669"/>
    <property type="project" value="TreeGrafter"/>
</dbReference>
<dbReference type="GO" id="GO:0046872">
    <property type="term" value="F:metal ion binding"/>
    <property type="evidence" value="ECO:0007669"/>
    <property type="project" value="UniProtKB-KW"/>
</dbReference>
<dbReference type="GO" id="GO:0004784">
    <property type="term" value="F:superoxide dismutase activity"/>
    <property type="evidence" value="ECO:0007669"/>
    <property type="project" value="UniProtKB-EC"/>
</dbReference>
<dbReference type="FunFam" id="1.10.287.990:FF:000001">
    <property type="entry name" value="Superoxide dismutase"/>
    <property type="match status" value="1"/>
</dbReference>
<dbReference type="FunFam" id="3.55.40.20:FF:000001">
    <property type="entry name" value="Superoxide dismutase"/>
    <property type="match status" value="1"/>
</dbReference>
<dbReference type="Gene3D" id="1.10.287.990">
    <property type="entry name" value="Fe,Mn superoxide dismutase (SOD) domain"/>
    <property type="match status" value="1"/>
</dbReference>
<dbReference type="Gene3D" id="3.55.40.20">
    <property type="entry name" value="Iron/manganese superoxide dismutase, C-terminal domain"/>
    <property type="match status" value="1"/>
</dbReference>
<dbReference type="InterPro" id="IPR001189">
    <property type="entry name" value="Mn/Fe_SOD"/>
</dbReference>
<dbReference type="InterPro" id="IPR019833">
    <property type="entry name" value="Mn/Fe_SOD_BS"/>
</dbReference>
<dbReference type="InterPro" id="IPR019832">
    <property type="entry name" value="Mn/Fe_SOD_C"/>
</dbReference>
<dbReference type="InterPro" id="IPR019831">
    <property type="entry name" value="Mn/Fe_SOD_N"/>
</dbReference>
<dbReference type="InterPro" id="IPR036324">
    <property type="entry name" value="Mn/Fe_SOD_N_sf"/>
</dbReference>
<dbReference type="InterPro" id="IPR036314">
    <property type="entry name" value="SOD_C_sf"/>
</dbReference>
<dbReference type="PANTHER" id="PTHR43595">
    <property type="entry name" value="37S RIBOSOMAL PROTEIN S26, MITOCHONDRIAL"/>
    <property type="match status" value="1"/>
</dbReference>
<dbReference type="PANTHER" id="PTHR43595:SF2">
    <property type="entry name" value="SMALL RIBOSOMAL SUBUNIT PROTEIN MS42"/>
    <property type="match status" value="1"/>
</dbReference>
<dbReference type="Pfam" id="PF02777">
    <property type="entry name" value="Sod_Fe_C"/>
    <property type="match status" value="1"/>
</dbReference>
<dbReference type="Pfam" id="PF00081">
    <property type="entry name" value="Sod_Fe_N"/>
    <property type="match status" value="1"/>
</dbReference>
<dbReference type="PIRSF" id="PIRSF000349">
    <property type="entry name" value="SODismutase"/>
    <property type="match status" value="1"/>
</dbReference>
<dbReference type="PRINTS" id="PR01703">
    <property type="entry name" value="MNSODISMTASE"/>
</dbReference>
<dbReference type="SUPFAM" id="SSF54719">
    <property type="entry name" value="Fe,Mn superoxide dismutase (SOD), C-terminal domain"/>
    <property type="match status" value="1"/>
</dbReference>
<dbReference type="SUPFAM" id="SSF46609">
    <property type="entry name" value="Fe,Mn superoxide dismutase (SOD), N-terminal domain"/>
    <property type="match status" value="1"/>
</dbReference>
<dbReference type="PROSITE" id="PS00088">
    <property type="entry name" value="SOD_MN"/>
    <property type="match status" value="1"/>
</dbReference>
<accession>P53642</accession>